<proteinExistence type="inferred from homology"/>
<accession>Q5QA78</accession>
<geneLocation type="chloroplast"/>
<protein>
    <recommendedName>
        <fullName evidence="1">Photosystem I reaction center subunit VIII</fullName>
        <shortName evidence="1">PSI-I</shortName>
    </recommendedName>
</protein>
<keyword id="KW-0150">Chloroplast</keyword>
<keyword id="KW-0472">Membrane</keyword>
<keyword id="KW-0602">Photosynthesis</keyword>
<keyword id="KW-0603">Photosystem I</keyword>
<keyword id="KW-0934">Plastid</keyword>
<keyword id="KW-0793">Thylakoid</keyword>
<keyword id="KW-0812">Transmembrane</keyword>
<keyword id="KW-1133">Transmembrane helix</keyword>
<dbReference type="EMBL" id="AY757816">
    <property type="protein sequence ID" value="AAV74355.1"/>
    <property type="molecule type" value="Genomic_DNA"/>
</dbReference>
<dbReference type="GO" id="GO:0009535">
    <property type="term" value="C:chloroplast thylakoid membrane"/>
    <property type="evidence" value="ECO:0007669"/>
    <property type="project" value="UniProtKB-SubCell"/>
</dbReference>
<dbReference type="GO" id="GO:0009522">
    <property type="term" value="C:photosystem I"/>
    <property type="evidence" value="ECO:0007669"/>
    <property type="project" value="UniProtKB-KW"/>
</dbReference>
<dbReference type="GO" id="GO:0015979">
    <property type="term" value="P:photosynthesis"/>
    <property type="evidence" value="ECO:0007669"/>
    <property type="project" value="UniProtKB-UniRule"/>
</dbReference>
<dbReference type="HAMAP" id="MF_00431">
    <property type="entry name" value="PSI_PsaI"/>
    <property type="match status" value="1"/>
</dbReference>
<dbReference type="InterPro" id="IPR001302">
    <property type="entry name" value="PSI_PsaI"/>
</dbReference>
<dbReference type="InterPro" id="IPR036357">
    <property type="entry name" value="PSI_PsaI_sf"/>
</dbReference>
<dbReference type="NCBIfam" id="TIGR03052">
    <property type="entry name" value="PS_I_psaI"/>
    <property type="match status" value="1"/>
</dbReference>
<dbReference type="PANTHER" id="PTHR35775">
    <property type="match status" value="1"/>
</dbReference>
<dbReference type="PANTHER" id="PTHR35775:SF2">
    <property type="entry name" value="PHOTOSYSTEM I REACTION CENTER SUBUNIT VIII"/>
    <property type="match status" value="1"/>
</dbReference>
<dbReference type="Pfam" id="PF00796">
    <property type="entry name" value="PSI_8"/>
    <property type="match status" value="1"/>
</dbReference>
<dbReference type="SUPFAM" id="SSF81540">
    <property type="entry name" value="Subunit VIII of photosystem I reaction centre, PsaI"/>
    <property type="match status" value="1"/>
</dbReference>
<gene>
    <name evidence="1" type="primary">psaI</name>
</gene>
<feature type="chain" id="PRO_0000194635" description="Photosystem I reaction center subunit VIII">
    <location>
        <begin position="1"/>
        <end position="36"/>
    </location>
</feature>
<feature type="transmembrane region" description="Helical" evidence="1">
    <location>
        <begin position="6"/>
        <end position="28"/>
    </location>
</feature>
<evidence type="ECO:0000255" key="1">
    <source>
        <dbReference type="HAMAP-Rule" id="MF_00431"/>
    </source>
</evidence>
<sequence length="36" mass="3934">MTDLNLPSIFVPXVGLVFPAIAMASXFLHVQKNKIV</sequence>
<comment type="function">
    <text evidence="1">May help in the organization of the PsaL subunit.</text>
</comment>
<comment type="subcellular location">
    <subcellularLocation>
        <location evidence="1">Plastid</location>
        <location evidence="1">Chloroplast thylakoid membrane</location>
        <topology evidence="1">Single-pass membrane protein</topology>
    </subcellularLocation>
</comment>
<comment type="similarity">
    <text evidence="1">Belongs to the PsaI family.</text>
</comment>
<reference key="1">
    <citation type="journal article" date="2004" name="BMC Evol. Biol.">
        <title>Long branch attraction, taxon sampling, and the earliest angiosperms: Amborella or monocots?</title>
        <authorList>
            <person name="Stefanovic S."/>
            <person name="Rice D.W."/>
            <person name="Palmer J.D."/>
        </authorList>
    </citation>
    <scope>NUCLEOTIDE SEQUENCE [GENOMIC DNA]</scope>
</reference>
<organism>
    <name type="scientific">Acorus gramineus</name>
    <name type="common">Dwarf sweet flag</name>
    <dbReference type="NCBI Taxonomy" id="55184"/>
    <lineage>
        <taxon>Eukaryota</taxon>
        <taxon>Viridiplantae</taxon>
        <taxon>Streptophyta</taxon>
        <taxon>Embryophyta</taxon>
        <taxon>Tracheophyta</taxon>
        <taxon>Spermatophyta</taxon>
        <taxon>Magnoliopsida</taxon>
        <taxon>Liliopsida</taxon>
        <taxon>Acoraceae</taxon>
        <taxon>Acorus</taxon>
    </lineage>
</organism>
<name>PSAI_ACOGR</name>